<gene>
    <name type="primary">NFASC</name>
    <name type="synonym">KIAA0756</name>
</gene>
<feature type="signal peptide" evidence="4">
    <location>
        <begin position="1"/>
        <end position="24"/>
    </location>
</feature>
<feature type="chain" id="PRO_0000015049" description="Neurofascin">
    <location>
        <begin position="25"/>
        <end position="1347"/>
    </location>
</feature>
<feature type="topological domain" description="Extracellular" evidence="4">
    <location>
        <begin position="25"/>
        <end position="1217"/>
    </location>
</feature>
<feature type="transmembrane region" description="Helical" evidence="4">
    <location>
        <begin position="1218"/>
        <end position="1238"/>
    </location>
</feature>
<feature type="topological domain" description="Cytoplasmic" evidence="4">
    <location>
        <begin position="1239"/>
        <end position="1347"/>
    </location>
</feature>
<feature type="domain" description="Ig-like C2-type 1">
    <location>
        <begin position="41"/>
        <end position="137"/>
    </location>
</feature>
<feature type="domain" description="Ig-like C2-type 2">
    <location>
        <begin position="143"/>
        <end position="230"/>
    </location>
</feature>
<feature type="domain" description="Ig-like C2-type 3">
    <location>
        <begin position="244"/>
        <end position="332"/>
    </location>
</feature>
<feature type="domain" description="Ig-like C2-type 4">
    <location>
        <begin position="337"/>
        <end position="424"/>
    </location>
</feature>
<feature type="domain" description="Ig-like C2-type 5">
    <location>
        <begin position="429"/>
        <end position="517"/>
    </location>
</feature>
<feature type="domain" description="Ig-like C2-type 6">
    <location>
        <begin position="521"/>
        <end position="603"/>
    </location>
</feature>
<feature type="domain" description="Fibronectin type-III 1" evidence="6">
    <location>
        <begin position="630"/>
        <end position="725"/>
    </location>
</feature>
<feature type="domain" description="Fibronectin type-III 2" evidence="6">
    <location>
        <begin position="730"/>
        <end position="823"/>
    </location>
</feature>
<feature type="domain" description="Fibronectin type-III 3" evidence="6">
    <location>
        <begin position="828"/>
        <end position="930"/>
    </location>
</feature>
<feature type="domain" description="Fibronectin type-III 4" evidence="6">
    <location>
        <begin position="934"/>
        <end position="1030"/>
    </location>
</feature>
<feature type="domain" description="Fibronectin type-III 5" evidence="6">
    <location>
        <begin position="1114"/>
        <end position="1206"/>
    </location>
</feature>
<feature type="region of interest" description="Disordered" evidence="7">
    <location>
        <begin position="713"/>
        <end position="740"/>
    </location>
</feature>
<feature type="region of interest" description="Disordered" evidence="7">
    <location>
        <begin position="915"/>
        <end position="934"/>
    </location>
</feature>
<feature type="region of interest" description="Disordered" evidence="7">
    <location>
        <begin position="1011"/>
        <end position="1040"/>
    </location>
</feature>
<feature type="region of interest" description="Disordered" evidence="7">
    <location>
        <begin position="1090"/>
        <end position="1111"/>
    </location>
</feature>
<feature type="region of interest" description="Disordered" evidence="7">
    <location>
        <begin position="1248"/>
        <end position="1347"/>
    </location>
</feature>
<feature type="compositionally biased region" description="Basic and acidic residues" evidence="7">
    <location>
        <begin position="916"/>
        <end position="926"/>
    </location>
</feature>
<feature type="compositionally biased region" description="Pro residues" evidence="7">
    <location>
        <begin position="1024"/>
        <end position="1040"/>
    </location>
</feature>
<feature type="compositionally biased region" description="Low complexity" evidence="7">
    <location>
        <begin position="1090"/>
        <end position="1105"/>
    </location>
</feature>
<feature type="compositionally biased region" description="Acidic residues" evidence="7">
    <location>
        <begin position="1261"/>
        <end position="1272"/>
    </location>
</feature>
<feature type="compositionally biased region" description="Polar residues" evidence="7">
    <location>
        <begin position="1278"/>
        <end position="1291"/>
    </location>
</feature>
<feature type="modified residue" description="Phosphotyrosine" evidence="20">
    <location>
        <position position="481"/>
    </location>
</feature>
<feature type="modified residue" description="Phosphoserine" evidence="20">
    <location>
        <position position="485"/>
    </location>
</feature>
<feature type="modified residue" description="Phosphoserine" evidence="3">
    <location>
        <position position="1267"/>
    </location>
</feature>
<feature type="modified residue" description="Phosphoserine" evidence="2">
    <location>
        <position position="1281"/>
    </location>
</feature>
<feature type="modified residue" description="Phosphoserine" evidence="2">
    <location>
        <position position="1294"/>
    </location>
</feature>
<feature type="modified residue" description="Phosphoserine" evidence="2">
    <location>
        <position position="1297"/>
    </location>
</feature>
<feature type="modified residue" description="Phosphoserine" evidence="3">
    <location>
        <position position="1333"/>
    </location>
</feature>
<feature type="modified residue" description="Phosphoserine" evidence="3">
    <location>
        <position position="1334"/>
    </location>
</feature>
<feature type="modified residue" description="Phosphoserine" evidence="3">
    <location>
        <position position="1338"/>
    </location>
</feature>
<feature type="glycosylation site" description="N-linked (GlcNAc...) asparagine" evidence="4">
    <location>
        <position position="305"/>
    </location>
</feature>
<feature type="glycosylation site" description="N-linked (GlcNAc...) asparagine" evidence="8">
    <location>
        <position position="409"/>
    </location>
</feature>
<feature type="glycosylation site" description="N-linked (GlcNAc...) asparagine" evidence="4">
    <location>
        <position position="446"/>
    </location>
</feature>
<feature type="glycosylation site" description="N-linked (GlcNAc...) asparagine" evidence="4">
    <location>
        <position position="483"/>
    </location>
</feature>
<feature type="glycosylation site" description="N-linked (GlcNAc...) asparagine" evidence="4">
    <location>
        <position position="752"/>
    </location>
</feature>
<feature type="glycosylation site" description="N-linked (GlcNAc...) asparagine" evidence="4">
    <location>
        <position position="778"/>
    </location>
</feature>
<feature type="glycosylation site" description="N-linked (GlcNAc...) asparagine" evidence="4">
    <location>
        <position position="973"/>
    </location>
</feature>
<feature type="glycosylation site" description="N-linked (GlcNAc...) asparagine" evidence="4">
    <location>
        <position position="988"/>
    </location>
</feature>
<feature type="disulfide bond" evidence="5 8">
    <location>
        <begin position="63"/>
        <end position="118"/>
    </location>
</feature>
<feature type="disulfide bond" evidence="5 8">
    <location>
        <begin position="162"/>
        <end position="213"/>
    </location>
</feature>
<feature type="disulfide bond" evidence="5 8">
    <location>
        <begin position="268"/>
        <end position="316"/>
    </location>
</feature>
<feature type="disulfide bond" evidence="5 8">
    <location>
        <begin position="358"/>
        <end position="408"/>
    </location>
</feature>
<feature type="disulfide bond" evidence="5">
    <location>
        <begin position="452"/>
        <end position="501"/>
    </location>
</feature>
<feature type="disulfide bond" evidence="5">
    <location>
        <begin position="543"/>
        <end position="592"/>
    </location>
</feature>
<feature type="splice variant" id="VSP_016424" description="In isoform 3, isoform 8, isoform 10 and isoform 11." evidence="14 18">
    <location>
        <begin position="31"/>
        <end position="36"/>
    </location>
</feature>
<feature type="splice variant" id="VSP_016425" description="In isoform 3, isoform 8 and isoform 11." evidence="14 18">
    <original>T</original>
    <variation>NHPYNDSSLRNHPDMYSA</variation>
    <location>
        <position position="236"/>
    </location>
</feature>
<feature type="splice variant" id="VSP_008937" description="In isoform 3, isoform 5, isoform 8 and isoform 10." evidence="14 15 18">
    <location>
        <begin position="611"/>
        <end position="625"/>
    </location>
</feature>
<feature type="splice variant" id="VSP_016426" description="In isoform 2." evidence="13 14">
    <original>ADQATPTNR</original>
    <variation>GNCPCSPWH</variation>
    <location>
        <begin position="611"/>
        <end position="619"/>
    </location>
</feature>
<feature type="splice variant" id="VSP_008938" description="In isoform 2." evidence="13 14">
    <location>
        <begin position="620"/>
        <end position="1347"/>
    </location>
</feature>
<feature type="splice variant" id="VSP_016427" description="In isoform 4, isoform 9 and isoform 12." evidence="14">
    <location>
        <begin position="824"/>
        <end position="930"/>
    </location>
</feature>
<feature type="splice variant" id="VSP_016428" description="In isoform 4, isoform 9 and isoform 12." evidence="14">
    <original>V</original>
    <variation>L</variation>
    <location>
        <position position="931"/>
    </location>
</feature>
<feature type="splice variant" id="VSP_008940" description="In isoform 3 and isoform 4." evidence="14 18">
    <location>
        <begin position="1030"/>
        <end position="1203"/>
    </location>
</feature>
<feature type="splice variant" id="VSP_016430" description="In isoform 6." evidence="13">
    <location>
        <begin position="1030"/>
        <end position="1152"/>
    </location>
</feature>
<feature type="splice variant" id="VSP_016429" description="In isoform 5." evidence="15">
    <original>ATPTAAPPTLPPTT</original>
    <variation>GRCMAAAPGVKGPS</variation>
    <location>
        <begin position="1030"/>
        <end position="1043"/>
    </location>
</feature>
<feature type="splice variant" id="VSP_016432" description="In isoform 8, isoform 10, isoform 11 and isoform 12." evidence="19">
    <location>
        <begin position="1035"/>
        <end position="1203"/>
    </location>
</feature>
<feature type="splice variant" id="VSP_016431" description="In isoform 13." evidence="19">
    <location>
        <begin position="1035"/>
        <end position="1113"/>
    </location>
</feature>
<feature type="splice variant" id="VSP_016433" description="In isoform 7." evidence="16">
    <location>
        <begin position="1114"/>
        <end position="1203"/>
    </location>
</feature>
<feature type="splice variant" id="VSP_016434" description="In isoform 6." evidence="13">
    <original>S</original>
    <variation>G</variation>
    <location>
        <position position="1153"/>
    </location>
</feature>
<feature type="sequence variant" id="VAR_017251" description="In dbSNP:rs3795564.">
    <original>T</original>
    <variation>M</variation>
    <location>
        <position position="159"/>
    </location>
</feature>
<feature type="sequence variant" id="VAR_083116" description="In NEDCPMD; uncertain significance." evidence="10">
    <original>R</original>
    <variation>P</variation>
    <location>
        <position position="359"/>
    </location>
</feature>
<feature type="sequence variant" id="VAR_083117" description="In NEDCPMD; uncertain significance; no protein expression." evidence="11">
    <location>
        <begin position="835"/>
        <end position="1347"/>
    </location>
</feature>
<feature type="sequence variant" id="VAR_083118" description="In NEDCPMD; uncertain significance; decreased protein abundance in patient-derived cells; decreased cell surface localization." evidence="12">
    <original>V</original>
    <variation>E</variation>
    <location>
        <position position="1229"/>
    </location>
</feature>
<feature type="sequence conflict" description="In Ref. 3; BAB55195." evidence="19" ref="3">
    <original>F</original>
    <variation>L</variation>
    <location>
        <position position="807"/>
    </location>
</feature>
<feature type="sequence conflict" description="In Ref. 3; AK127424." evidence="19" ref="3">
    <original>F</original>
    <variation>V</variation>
    <location>
        <position position="972"/>
    </location>
</feature>
<feature type="strand" evidence="21">
    <location>
        <begin position="43"/>
        <end position="46"/>
    </location>
</feature>
<feature type="strand" evidence="22">
    <location>
        <begin position="49"/>
        <end position="53"/>
    </location>
</feature>
<feature type="strand" evidence="21">
    <location>
        <begin position="55"/>
        <end position="57"/>
    </location>
</feature>
<feature type="strand" evidence="21">
    <location>
        <begin position="63"/>
        <end position="65"/>
    </location>
</feature>
<feature type="strand" evidence="21">
    <location>
        <begin position="72"/>
        <end position="77"/>
    </location>
</feature>
<feature type="helix" evidence="21">
    <location>
        <begin position="84"/>
        <end position="86"/>
    </location>
</feature>
<feature type="strand" evidence="21">
    <location>
        <begin position="94"/>
        <end position="96"/>
    </location>
</feature>
<feature type="turn" evidence="21">
    <location>
        <begin position="104"/>
        <end position="106"/>
    </location>
</feature>
<feature type="helix" evidence="22">
    <location>
        <begin position="109"/>
        <end position="112"/>
    </location>
</feature>
<feature type="strand" evidence="21">
    <location>
        <begin position="114"/>
        <end position="121"/>
    </location>
</feature>
<feature type="strand" evidence="21">
    <location>
        <begin position="126"/>
        <end position="136"/>
    </location>
</feature>
<feature type="strand" evidence="21">
    <location>
        <begin position="150"/>
        <end position="153"/>
    </location>
</feature>
<feature type="strand" evidence="21">
    <location>
        <begin position="158"/>
        <end position="160"/>
    </location>
</feature>
<feature type="strand" evidence="21">
    <location>
        <begin position="172"/>
        <end position="176"/>
    </location>
</feature>
<feature type="strand" evidence="21">
    <location>
        <begin position="187"/>
        <end position="191"/>
    </location>
</feature>
<feature type="strand" evidence="21">
    <location>
        <begin position="197"/>
        <end position="201"/>
    </location>
</feature>
<feature type="helix" evidence="21">
    <location>
        <begin position="205"/>
        <end position="207"/>
    </location>
</feature>
<feature type="strand" evidence="21">
    <location>
        <begin position="211"/>
        <end position="216"/>
    </location>
</feature>
<feature type="turn" evidence="21">
    <location>
        <begin position="218"/>
        <end position="220"/>
    </location>
</feature>
<feature type="strand" evidence="21">
    <location>
        <begin position="223"/>
        <end position="225"/>
    </location>
</feature>
<feature type="strand" evidence="21">
    <location>
        <begin position="231"/>
        <end position="234"/>
    </location>
</feature>
<feature type="strand" evidence="22">
    <location>
        <begin position="236"/>
        <end position="238"/>
    </location>
</feature>
<feature type="strand" evidence="21">
    <location>
        <begin position="246"/>
        <end position="249"/>
    </location>
</feature>
<feature type="strand" evidence="21">
    <location>
        <begin position="251"/>
        <end position="259"/>
    </location>
</feature>
<feature type="strand" evidence="21">
    <location>
        <begin position="264"/>
        <end position="267"/>
    </location>
</feature>
<feature type="strand" evidence="21">
    <location>
        <begin position="277"/>
        <end position="282"/>
    </location>
</feature>
<feature type="turn" evidence="21">
    <location>
        <begin position="289"/>
        <end position="291"/>
    </location>
</feature>
<feature type="strand" evidence="21">
    <location>
        <begin position="292"/>
        <end position="295"/>
    </location>
</feature>
<feature type="helix" evidence="21">
    <location>
        <begin position="296"/>
        <end position="298"/>
    </location>
</feature>
<feature type="strand" evidence="21">
    <location>
        <begin position="300"/>
        <end position="305"/>
    </location>
</feature>
<feature type="helix" evidence="21">
    <location>
        <begin position="308"/>
        <end position="310"/>
    </location>
</feature>
<feature type="strand" evidence="21">
    <location>
        <begin position="312"/>
        <end position="319"/>
    </location>
</feature>
<feature type="strand" evidence="21">
    <location>
        <begin position="324"/>
        <end position="341"/>
    </location>
</feature>
<feature type="strand" evidence="21">
    <location>
        <begin position="346"/>
        <end position="348"/>
    </location>
</feature>
<feature type="strand" evidence="21">
    <location>
        <begin position="354"/>
        <end position="357"/>
    </location>
</feature>
<feature type="strand" evidence="21">
    <location>
        <begin position="359"/>
        <end position="364"/>
    </location>
</feature>
<feature type="strand" evidence="21">
    <location>
        <begin position="367"/>
        <end position="372"/>
    </location>
</feature>
<feature type="helix" evidence="21">
    <location>
        <begin position="377"/>
        <end position="379"/>
    </location>
</feature>
<feature type="strand" evidence="21">
    <location>
        <begin position="386"/>
        <end position="389"/>
    </location>
</feature>
<feature type="strand" evidence="21">
    <location>
        <begin position="392"/>
        <end position="397"/>
    </location>
</feature>
<feature type="strand" evidence="21">
    <location>
        <begin position="405"/>
        <end position="412"/>
    </location>
</feature>
<feature type="strand" evidence="21">
    <location>
        <begin position="415"/>
        <end position="425"/>
    </location>
</feature>
<evidence type="ECO:0000250" key="1"/>
<evidence type="ECO:0000250" key="2">
    <source>
        <dbReference type="UniProtKB" id="P97685"/>
    </source>
</evidence>
<evidence type="ECO:0000250" key="3">
    <source>
        <dbReference type="UniProtKB" id="Q810U3"/>
    </source>
</evidence>
<evidence type="ECO:0000255" key="4"/>
<evidence type="ECO:0000255" key="5">
    <source>
        <dbReference type="PROSITE-ProRule" id="PRU00114"/>
    </source>
</evidence>
<evidence type="ECO:0000255" key="6">
    <source>
        <dbReference type="PROSITE-ProRule" id="PRU00316"/>
    </source>
</evidence>
<evidence type="ECO:0000256" key="7">
    <source>
        <dbReference type="SAM" id="MobiDB-lite"/>
    </source>
</evidence>
<evidence type="ECO:0000269" key="8">
    <source>
    </source>
</evidence>
<evidence type="ECO:0000269" key="9">
    <source>
    </source>
</evidence>
<evidence type="ECO:0000269" key="10">
    <source>
    </source>
</evidence>
<evidence type="ECO:0000269" key="11">
    <source>
    </source>
</evidence>
<evidence type="ECO:0000269" key="12">
    <source>
    </source>
</evidence>
<evidence type="ECO:0000303" key="13">
    <source>
    </source>
</evidence>
<evidence type="ECO:0000303" key="14">
    <source>
    </source>
</evidence>
<evidence type="ECO:0000303" key="15">
    <source>
    </source>
</evidence>
<evidence type="ECO:0000303" key="16">
    <source>
    </source>
</evidence>
<evidence type="ECO:0000303" key="17">
    <source>
    </source>
</evidence>
<evidence type="ECO:0000303" key="18">
    <source>
    </source>
</evidence>
<evidence type="ECO:0000305" key="19"/>
<evidence type="ECO:0007744" key="20">
    <source>
    </source>
</evidence>
<evidence type="ECO:0007829" key="21">
    <source>
        <dbReference type="PDB" id="3P3Y"/>
    </source>
</evidence>
<evidence type="ECO:0007829" key="22">
    <source>
        <dbReference type="PDB" id="3P40"/>
    </source>
</evidence>
<name>NFASC_HUMAN</name>
<keyword id="KW-0002">3D-structure</keyword>
<keyword id="KW-0025">Alternative splicing</keyword>
<keyword id="KW-0130">Cell adhesion</keyword>
<keyword id="KW-0965">Cell junction</keyword>
<keyword id="KW-1003">Cell membrane</keyword>
<keyword id="KW-0225">Disease variant</keyword>
<keyword id="KW-1015">Disulfide bond</keyword>
<keyword id="KW-0325">Glycoprotein</keyword>
<keyword id="KW-0393">Immunoglobulin domain</keyword>
<keyword id="KW-0472">Membrane</keyword>
<keyword id="KW-0597">Phosphoprotein</keyword>
<keyword id="KW-1267">Proteomics identification</keyword>
<keyword id="KW-1185">Reference proteome</keyword>
<keyword id="KW-0677">Repeat</keyword>
<keyword id="KW-0732">Signal</keyword>
<keyword id="KW-0812">Transmembrane</keyword>
<keyword id="KW-1133">Transmembrane helix</keyword>
<proteinExistence type="evidence at protein level"/>
<dbReference type="EMBL" id="AB018299">
    <property type="protein sequence ID" value="BAA34476.3"/>
    <property type="status" value="ALT_INIT"/>
    <property type="molecule type" value="mRNA"/>
</dbReference>
<dbReference type="EMBL" id="AK027553">
    <property type="protein sequence ID" value="BAB55195.1"/>
    <property type="status" value="ALT_INIT"/>
    <property type="molecule type" value="mRNA"/>
</dbReference>
<dbReference type="EMBL" id="AK090639">
    <property type="protein sequence ID" value="BAG52203.1"/>
    <property type="molecule type" value="mRNA"/>
</dbReference>
<dbReference type="EMBL" id="AK127424">
    <property type="status" value="NOT_ANNOTATED_CDS"/>
    <property type="molecule type" value="mRNA"/>
</dbReference>
<dbReference type="EMBL" id="AK128699">
    <property type="protein sequence ID" value="BAC87577.1"/>
    <property type="status" value="ALT_INIT"/>
    <property type="molecule type" value="mRNA"/>
</dbReference>
<dbReference type="EMBL" id="AC096675">
    <property type="status" value="NOT_ANNOTATED_CDS"/>
    <property type="molecule type" value="Genomic_DNA"/>
</dbReference>
<dbReference type="EMBL" id="AL391822">
    <property type="status" value="NOT_ANNOTATED_CDS"/>
    <property type="molecule type" value="Genomic_DNA"/>
</dbReference>
<dbReference type="EMBL" id="BC008124">
    <property type="protein sequence ID" value="AAH08124.2"/>
    <property type="molecule type" value="mRNA"/>
</dbReference>
<dbReference type="EMBL" id="BC117674">
    <property type="protein sequence ID" value="AAI17675.2"/>
    <property type="molecule type" value="mRNA"/>
</dbReference>
<dbReference type="EMBL" id="BC137013">
    <property type="protein sequence ID" value="AAI37014.1"/>
    <property type="molecule type" value="mRNA"/>
</dbReference>
<dbReference type="EMBL" id="BC144454">
    <property type="protein sequence ID" value="AAI44455.1"/>
    <property type="molecule type" value="mRNA"/>
</dbReference>
<dbReference type="EMBL" id="AB177861">
    <property type="protein sequence ID" value="BAD66839.1"/>
    <property type="molecule type" value="mRNA"/>
</dbReference>
<dbReference type="EMBL" id="BX537841">
    <property type="protein sequence ID" value="CAD97852.1"/>
    <property type="molecule type" value="mRNA"/>
</dbReference>
<dbReference type="EMBL" id="CR749402">
    <property type="protein sequence ID" value="CAH18247.1"/>
    <property type="molecule type" value="mRNA"/>
</dbReference>
<dbReference type="CCDS" id="CCDS30982.1">
    <molecule id="O94856-3"/>
</dbReference>
<dbReference type="CCDS" id="CCDS53460.1">
    <molecule id="O94856-9"/>
</dbReference>
<dbReference type="CCDS" id="CCDS53461.1">
    <molecule id="O94856-2"/>
</dbReference>
<dbReference type="CCDS" id="CCDS53462.1">
    <molecule id="O94856-8"/>
</dbReference>
<dbReference type="CCDS" id="CCDS91149.1">
    <molecule id="O94856-11"/>
</dbReference>
<dbReference type="RefSeq" id="NP_001005388.2">
    <molecule id="O94856-9"/>
    <property type="nucleotide sequence ID" value="NM_001005388.3"/>
</dbReference>
<dbReference type="RefSeq" id="NP_001005389.2">
    <molecule id="O94856-2"/>
    <property type="nucleotide sequence ID" value="NM_001005389.2"/>
</dbReference>
<dbReference type="RefSeq" id="NP_001153803.1">
    <molecule id="O94856-11"/>
    <property type="nucleotide sequence ID" value="NM_001160331.2"/>
</dbReference>
<dbReference type="RefSeq" id="NP_001153804.1">
    <molecule id="O94856-8"/>
    <property type="nucleotide sequence ID" value="NM_001160332.2"/>
</dbReference>
<dbReference type="RefSeq" id="NP_001153805.1">
    <property type="nucleotide sequence ID" value="NM_001160333.1"/>
</dbReference>
<dbReference type="RefSeq" id="NP_001365258.1">
    <molecule id="O94856-1"/>
    <property type="nucleotide sequence ID" value="NM_001378329.1"/>
</dbReference>
<dbReference type="RefSeq" id="NP_055905.2">
    <molecule id="O94856-3"/>
    <property type="nucleotide sequence ID" value="NM_015090.4"/>
</dbReference>
<dbReference type="RefSeq" id="XP_011507621.1">
    <property type="nucleotide sequence ID" value="XM_011509319.1"/>
</dbReference>
<dbReference type="RefSeq" id="XP_011507630.1">
    <property type="nucleotide sequence ID" value="XM_011509328.1"/>
</dbReference>
<dbReference type="RefSeq" id="XP_024310068.1">
    <molecule id="O94856-9"/>
    <property type="nucleotide sequence ID" value="XM_024454300.2"/>
</dbReference>
<dbReference type="RefSeq" id="XP_047305911.1">
    <molecule id="O94856-1"/>
    <property type="nucleotide sequence ID" value="XM_047449955.1"/>
</dbReference>
<dbReference type="RefSeq" id="XP_047305973.1">
    <molecule id="O94856-4"/>
    <property type="nucleotide sequence ID" value="XM_047450017.1"/>
</dbReference>
<dbReference type="RefSeq" id="XP_054191270.1">
    <molecule id="O94856-1"/>
    <property type="nucleotide sequence ID" value="XM_054335295.1"/>
</dbReference>
<dbReference type="RefSeq" id="XP_054191281.1">
    <molecule id="O94856-9"/>
    <property type="nucleotide sequence ID" value="XM_054335306.1"/>
</dbReference>
<dbReference type="PDB" id="3P3Y">
    <property type="method" value="X-ray"/>
    <property type="resolution" value="2.60 A"/>
    <property type="chains" value="A=25-428"/>
</dbReference>
<dbReference type="PDB" id="3P40">
    <property type="method" value="X-ray"/>
    <property type="resolution" value="3.20 A"/>
    <property type="chains" value="A=25-428"/>
</dbReference>
<dbReference type="PDBsum" id="3P3Y"/>
<dbReference type="PDBsum" id="3P40"/>
<dbReference type="EMDB" id="EMD-16540"/>
<dbReference type="SMR" id="O94856"/>
<dbReference type="BioGRID" id="116737">
    <property type="interactions" value="6"/>
</dbReference>
<dbReference type="FunCoup" id="O94856">
    <property type="interactions" value="690"/>
</dbReference>
<dbReference type="IntAct" id="O94856">
    <property type="interactions" value="10"/>
</dbReference>
<dbReference type="STRING" id="9606.ENSP00000344786"/>
<dbReference type="CarbonylDB" id="O94856"/>
<dbReference type="GlyConnect" id="1552">
    <property type="glycosylation" value="15 N-Linked glycans (6 sites)"/>
</dbReference>
<dbReference type="GlyCosmos" id="O94856">
    <property type="glycosylation" value="9 sites, 15 glycans"/>
</dbReference>
<dbReference type="GlyGen" id="O94856">
    <property type="glycosylation" value="16 sites, 32 N-linked glycans (8 sites), 2 O-linked glycans (5 sites)"/>
</dbReference>
<dbReference type="iPTMnet" id="O94856"/>
<dbReference type="PhosphoSitePlus" id="O94856"/>
<dbReference type="SwissPalm" id="O94856"/>
<dbReference type="BioMuta" id="NFASC"/>
<dbReference type="jPOST" id="O94856"/>
<dbReference type="MassIVE" id="O94856"/>
<dbReference type="PaxDb" id="9606-ENSP00000344786"/>
<dbReference type="PeptideAtlas" id="O94856"/>
<dbReference type="ProteomicsDB" id="50490">
    <molecule id="O94856-1"/>
</dbReference>
<dbReference type="ProteomicsDB" id="50491">
    <molecule id="O94856-10"/>
</dbReference>
<dbReference type="ProteomicsDB" id="50492">
    <molecule id="O94856-11"/>
</dbReference>
<dbReference type="ProteomicsDB" id="50493">
    <molecule id="O94856-12"/>
</dbReference>
<dbReference type="ProteomicsDB" id="50494">
    <molecule id="O94856-13"/>
</dbReference>
<dbReference type="ProteomicsDB" id="50495">
    <molecule id="O94856-2"/>
</dbReference>
<dbReference type="ProteomicsDB" id="50496">
    <molecule id="O94856-3"/>
</dbReference>
<dbReference type="ProteomicsDB" id="50497">
    <molecule id="O94856-4"/>
</dbReference>
<dbReference type="ProteomicsDB" id="50498">
    <molecule id="O94856-5"/>
</dbReference>
<dbReference type="ProteomicsDB" id="50499">
    <molecule id="O94856-6"/>
</dbReference>
<dbReference type="ProteomicsDB" id="50500">
    <molecule id="O94856-7"/>
</dbReference>
<dbReference type="ProteomicsDB" id="50501">
    <molecule id="O94856-8"/>
</dbReference>
<dbReference type="ProteomicsDB" id="50502">
    <molecule id="O94856-9"/>
</dbReference>
<dbReference type="TopDownProteomics" id="O94856-2">
    <molecule id="O94856-2"/>
</dbReference>
<dbReference type="ABCD" id="O94856">
    <property type="antibodies" value="1 sequenced antibody"/>
</dbReference>
<dbReference type="Antibodypedia" id="2194">
    <property type="antibodies" value="225 antibodies from 34 providers"/>
</dbReference>
<dbReference type="DNASU" id="23114"/>
<dbReference type="Ensembl" id="ENST00000339876.11">
    <molecule id="O94856-9"/>
    <property type="protein sequence ID" value="ENSP00000344786.6"/>
    <property type="gene ID" value="ENSG00000163531.17"/>
</dbReference>
<dbReference type="Ensembl" id="ENST00000401399.5">
    <molecule id="O94856-9"/>
    <property type="protein sequence ID" value="ENSP00000385637.1"/>
    <property type="gene ID" value="ENSG00000163531.17"/>
</dbReference>
<dbReference type="Ensembl" id="ENST00000403080.5">
    <molecule id="O94856-2"/>
    <property type="protein sequence ID" value="ENSP00000384875.1"/>
    <property type="gene ID" value="ENSG00000163531.17"/>
</dbReference>
<dbReference type="Ensembl" id="ENST00000404076.5">
    <molecule id="O94856-10"/>
    <property type="protein sequence ID" value="ENSP00000385676.1"/>
    <property type="gene ID" value="ENSG00000163531.17"/>
</dbReference>
<dbReference type="Ensembl" id="ENST00000430393.7">
    <molecule id="O94856-8"/>
    <property type="protein sequence ID" value="ENSP00000415031.3"/>
    <property type="gene ID" value="ENSG00000163531.17"/>
</dbReference>
<dbReference type="Ensembl" id="ENST00000513543.6">
    <molecule id="O94856-3"/>
    <property type="protein sequence ID" value="ENSP00000425908.1"/>
    <property type="gene ID" value="ENSG00000163531.17"/>
</dbReference>
<dbReference type="Ensembl" id="ENST00000539706.6">
    <molecule id="O94856-11"/>
    <property type="protein sequence ID" value="ENSP00000438614.2"/>
    <property type="gene ID" value="ENSG00000163531.17"/>
</dbReference>
<dbReference type="GeneID" id="23114"/>
<dbReference type="KEGG" id="hsa:23114"/>
<dbReference type="MANE-Select" id="ENST00000339876.11">
    <molecule id="O94856-9"/>
    <property type="protein sequence ID" value="ENSP00000344786.6"/>
    <property type="RefSeq nucleotide sequence ID" value="NM_001005388.3"/>
    <property type="RefSeq protein sequence ID" value="NP_001005388.2"/>
</dbReference>
<dbReference type="UCSC" id="uc001hbh.4">
    <molecule id="O94856-1"/>
    <property type="organism name" value="human"/>
</dbReference>
<dbReference type="AGR" id="HGNC:29866"/>
<dbReference type="CTD" id="23114"/>
<dbReference type="DisGeNET" id="23114"/>
<dbReference type="GeneCards" id="NFASC"/>
<dbReference type="HGNC" id="HGNC:29866">
    <property type="gene designation" value="NFASC"/>
</dbReference>
<dbReference type="HPA" id="ENSG00000163531">
    <property type="expression patterns" value="Tissue enhanced (brain)"/>
</dbReference>
<dbReference type="MalaCards" id="NFASC"/>
<dbReference type="MIM" id="609145">
    <property type="type" value="gene"/>
</dbReference>
<dbReference type="MIM" id="618356">
    <property type="type" value="phenotype"/>
</dbReference>
<dbReference type="neXtProt" id="NX_O94856"/>
<dbReference type="OpenTargets" id="ENSG00000163531"/>
<dbReference type="PharmGKB" id="PA128395771"/>
<dbReference type="VEuPathDB" id="HostDB:ENSG00000163531"/>
<dbReference type="eggNOG" id="KOG3513">
    <property type="taxonomic scope" value="Eukaryota"/>
</dbReference>
<dbReference type="GeneTree" id="ENSGT00940000157024"/>
<dbReference type="HOGENOM" id="CLU_005756_2_0_1"/>
<dbReference type="InParanoid" id="O94856"/>
<dbReference type="OMA" id="NHSSYPG"/>
<dbReference type="OrthoDB" id="10010359at2759"/>
<dbReference type="PAN-GO" id="O94856">
    <property type="GO annotations" value="6 GO annotations based on evolutionary models"/>
</dbReference>
<dbReference type="PhylomeDB" id="O94856"/>
<dbReference type="TreeFam" id="TF351098"/>
<dbReference type="PathwayCommons" id="O94856"/>
<dbReference type="Reactome" id="R-HSA-445095">
    <property type="pathway name" value="Interaction between L1 and Ankyrins"/>
</dbReference>
<dbReference type="Reactome" id="R-HSA-447043">
    <property type="pathway name" value="Neurofascin interactions"/>
</dbReference>
<dbReference type="Reactome" id="R-HSA-6798695">
    <property type="pathway name" value="Neutrophil degranulation"/>
</dbReference>
<dbReference type="SignaLink" id="O94856"/>
<dbReference type="SIGNOR" id="O94856"/>
<dbReference type="BioGRID-ORCS" id="23114">
    <property type="hits" value="14 hits in 1147 CRISPR screens"/>
</dbReference>
<dbReference type="CD-CODE" id="FB4E32DD">
    <property type="entry name" value="Presynaptic clusters and postsynaptic densities"/>
</dbReference>
<dbReference type="ChiTaRS" id="NFASC">
    <property type="organism name" value="human"/>
</dbReference>
<dbReference type="EvolutionaryTrace" id="O94856"/>
<dbReference type="GeneWiki" id="NFASC"/>
<dbReference type="GenomeRNAi" id="23114"/>
<dbReference type="Pharos" id="O94856">
    <property type="development level" value="Tbio"/>
</dbReference>
<dbReference type="PRO" id="PR:O94856"/>
<dbReference type="Proteomes" id="UP000005640">
    <property type="component" value="Chromosome 1"/>
</dbReference>
<dbReference type="RNAct" id="O94856">
    <property type="molecule type" value="protein"/>
</dbReference>
<dbReference type="Bgee" id="ENSG00000163531">
    <property type="expression patterns" value="Expressed in inferior olivary complex and 187 other cell types or tissues"/>
</dbReference>
<dbReference type="ExpressionAtlas" id="O94856">
    <property type="expression patterns" value="baseline and differential"/>
</dbReference>
<dbReference type="GO" id="GO:0030424">
    <property type="term" value="C:axon"/>
    <property type="evidence" value="ECO:0000318"/>
    <property type="project" value="GO_Central"/>
</dbReference>
<dbReference type="GO" id="GO:0043194">
    <property type="term" value="C:axon initial segment"/>
    <property type="evidence" value="ECO:0000250"/>
    <property type="project" value="ARUK-UCL"/>
</dbReference>
<dbReference type="GO" id="GO:0101003">
    <property type="term" value="C:ficolin-1-rich granule membrane"/>
    <property type="evidence" value="ECO:0000304"/>
    <property type="project" value="Reactome"/>
</dbReference>
<dbReference type="GO" id="GO:0005925">
    <property type="term" value="C:focal adhesion"/>
    <property type="evidence" value="ECO:0007005"/>
    <property type="project" value="UniProtKB"/>
</dbReference>
<dbReference type="GO" id="GO:0033268">
    <property type="term" value="C:node of Ranvier"/>
    <property type="evidence" value="ECO:0000250"/>
    <property type="project" value="BHF-UCL"/>
</dbReference>
<dbReference type="GO" id="GO:0033010">
    <property type="term" value="C:paranodal junction"/>
    <property type="evidence" value="ECO:0007669"/>
    <property type="project" value="UniProtKB-SubCell"/>
</dbReference>
<dbReference type="GO" id="GO:0005886">
    <property type="term" value="C:plasma membrane"/>
    <property type="evidence" value="ECO:0000314"/>
    <property type="project" value="UniProtKB"/>
</dbReference>
<dbReference type="GO" id="GO:0098632">
    <property type="term" value="F:cell-cell adhesion mediator activity"/>
    <property type="evidence" value="ECO:0000318"/>
    <property type="project" value="GO_Central"/>
</dbReference>
<dbReference type="GO" id="GO:0007411">
    <property type="term" value="P:axon guidance"/>
    <property type="evidence" value="ECO:0000318"/>
    <property type="project" value="GO_Central"/>
</dbReference>
<dbReference type="GO" id="GO:0098609">
    <property type="term" value="P:cell-cell adhesion"/>
    <property type="evidence" value="ECO:0000318"/>
    <property type="project" value="GO_Central"/>
</dbReference>
<dbReference type="GO" id="GO:0042552">
    <property type="term" value="P:myelination"/>
    <property type="evidence" value="ECO:0000250"/>
    <property type="project" value="BHF-UCL"/>
</dbReference>
<dbReference type="GO" id="GO:0007422">
    <property type="term" value="P:peripheral nervous system development"/>
    <property type="evidence" value="ECO:0000250"/>
    <property type="project" value="BHF-UCL"/>
</dbReference>
<dbReference type="CDD" id="cd00063">
    <property type="entry name" value="FN3"/>
    <property type="match status" value="5"/>
</dbReference>
<dbReference type="CDD" id="cd05731">
    <property type="entry name" value="Ig3_L1-CAM_like"/>
    <property type="match status" value="1"/>
</dbReference>
<dbReference type="CDD" id="cd05845">
    <property type="entry name" value="IgI_2_L1-CAM_like"/>
    <property type="match status" value="1"/>
</dbReference>
<dbReference type="CDD" id="cd05875">
    <property type="entry name" value="IgI_hNeurofascin_like"/>
    <property type="match status" value="1"/>
</dbReference>
<dbReference type="FunFam" id="2.60.40.10:FF:000057">
    <property type="entry name" value="neural cell adhesion molecule L1"/>
    <property type="match status" value="1"/>
</dbReference>
<dbReference type="FunFam" id="2.60.40.10:FF:000363">
    <property type="entry name" value="neurofascin isoform X1"/>
    <property type="match status" value="1"/>
</dbReference>
<dbReference type="FunFam" id="2.60.40.10:FF:000512">
    <property type="entry name" value="neurofascin isoform X1"/>
    <property type="match status" value="1"/>
</dbReference>
<dbReference type="FunFam" id="2.60.40.10:FF:000574">
    <property type="entry name" value="neurofascin isoform X1"/>
    <property type="match status" value="1"/>
</dbReference>
<dbReference type="FunFam" id="2.60.40.10:FF:001360">
    <property type="entry name" value="neurofascin isoform X1"/>
    <property type="match status" value="1"/>
</dbReference>
<dbReference type="FunFam" id="2.60.40.10:FF:000525">
    <property type="entry name" value="neurofascin isoform X2"/>
    <property type="match status" value="1"/>
</dbReference>
<dbReference type="FunFam" id="2.60.40.10:FF:000005">
    <property type="entry name" value="Neuronal cell adhesion molecule"/>
    <property type="match status" value="1"/>
</dbReference>
<dbReference type="FunFam" id="2.60.40.10:FF:000038">
    <property type="entry name" value="Neuronal cell adhesion molecule"/>
    <property type="match status" value="1"/>
</dbReference>
<dbReference type="FunFam" id="2.60.40.10:FF:000078">
    <property type="entry name" value="Neuronal cell adhesion molecule"/>
    <property type="match status" value="1"/>
</dbReference>
<dbReference type="FunFam" id="2.60.40.10:FF:000114">
    <property type="entry name" value="Neuronal cell adhesion molecule"/>
    <property type="match status" value="1"/>
</dbReference>
<dbReference type="FunFam" id="2.60.40.10:FF:000347">
    <property type="entry name" value="Neuronal cell adhesion molecule"/>
    <property type="match status" value="1"/>
</dbReference>
<dbReference type="Gene3D" id="2.60.40.10">
    <property type="entry name" value="Immunoglobulins"/>
    <property type="match status" value="11"/>
</dbReference>
<dbReference type="InterPro" id="IPR003961">
    <property type="entry name" value="FN3_dom"/>
</dbReference>
<dbReference type="InterPro" id="IPR036116">
    <property type="entry name" value="FN3_sf"/>
</dbReference>
<dbReference type="InterPro" id="IPR007110">
    <property type="entry name" value="Ig-like_dom"/>
</dbReference>
<dbReference type="InterPro" id="IPR036179">
    <property type="entry name" value="Ig-like_dom_sf"/>
</dbReference>
<dbReference type="InterPro" id="IPR013783">
    <property type="entry name" value="Ig-like_fold"/>
</dbReference>
<dbReference type="InterPro" id="IPR013098">
    <property type="entry name" value="Ig_I-set"/>
</dbReference>
<dbReference type="InterPro" id="IPR003599">
    <property type="entry name" value="Ig_sub"/>
</dbReference>
<dbReference type="InterPro" id="IPR003598">
    <property type="entry name" value="Ig_sub2"/>
</dbReference>
<dbReference type="InterPro" id="IPR013151">
    <property type="entry name" value="Immunoglobulin_dom"/>
</dbReference>
<dbReference type="InterPro" id="IPR026966">
    <property type="entry name" value="Neurofascin/L1/NrCAM_C"/>
</dbReference>
<dbReference type="InterPro" id="IPR026965">
    <property type="entry name" value="NFASC_Ig-like"/>
</dbReference>
<dbReference type="PANTHER" id="PTHR44170:SF12">
    <property type="entry name" value="NEUROFASCIN"/>
    <property type="match status" value="1"/>
</dbReference>
<dbReference type="PANTHER" id="PTHR44170">
    <property type="entry name" value="PROTEIN SIDEKICK"/>
    <property type="match status" value="1"/>
</dbReference>
<dbReference type="Pfam" id="PF13882">
    <property type="entry name" value="Bravo_FIGEY"/>
    <property type="match status" value="1"/>
</dbReference>
<dbReference type="Pfam" id="PF00041">
    <property type="entry name" value="fn3"/>
    <property type="match status" value="4"/>
</dbReference>
<dbReference type="Pfam" id="PF07679">
    <property type="entry name" value="I-set"/>
    <property type="match status" value="3"/>
</dbReference>
<dbReference type="Pfam" id="PF00047">
    <property type="entry name" value="ig"/>
    <property type="match status" value="1"/>
</dbReference>
<dbReference type="Pfam" id="PF13927">
    <property type="entry name" value="Ig_3"/>
    <property type="match status" value="2"/>
</dbReference>
<dbReference type="SMART" id="SM00060">
    <property type="entry name" value="FN3"/>
    <property type="match status" value="5"/>
</dbReference>
<dbReference type="SMART" id="SM00409">
    <property type="entry name" value="IG"/>
    <property type="match status" value="6"/>
</dbReference>
<dbReference type="SMART" id="SM00408">
    <property type="entry name" value="IGc2"/>
    <property type="match status" value="6"/>
</dbReference>
<dbReference type="SUPFAM" id="SSF49265">
    <property type="entry name" value="Fibronectin type III"/>
    <property type="match status" value="3"/>
</dbReference>
<dbReference type="SUPFAM" id="SSF48726">
    <property type="entry name" value="Immunoglobulin"/>
    <property type="match status" value="6"/>
</dbReference>
<dbReference type="PROSITE" id="PS50853">
    <property type="entry name" value="FN3"/>
    <property type="match status" value="5"/>
</dbReference>
<dbReference type="PROSITE" id="PS50835">
    <property type="entry name" value="IG_LIKE"/>
    <property type="match status" value="6"/>
</dbReference>
<reference key="1">
    <citation type="journal article" date="1998" name="DNA Res.">
        <title>Prediction of the coding sequences of unidentified human genes. XI. The complete sequences of 100 new cDNA clones from brain which code for large proteins in vitro.</title>
        <authorList>
            <person name="Nagase T."/>
            <person name="Ishikawa K."/>
            <person name="Suyama M."/>
            <person name="Kikuno R."/>
            <person name="Miyajima N."/>
            <person name="Tanaka A."/>
            <person name="Kotani H."/>
            <person name="Nomura N."/>
            <person name="Ohara O."/>
        </authorList>
    </citation>
    <scope>NUCLEOTIDE SEQUENCE [LARGE SCALE MRNA] (ISOFORM 3)</scope>
    <source>
        <tissue>Brain</tissue>
    </source>
</reference>
<reference key="2">
    <citation type="journal article" date="2002" name="DNA Res.">
        <title>Construction of expression-ready cDNA clones for KIAA genes: manual curation of 330 KIAA cDNA clones.</title>
        <authorList>
            <person name="Nakajima D."/>
            <person name="Okazaki N."/>
            <person name="Yamakawa H."/>
            <person name="Kikuno R."/>
            <person name="Ohara O."/>
            <person name="Nagase T."/>
        </authorList>
    </citation>
    <scope>SEQUENCE REVISION</scope>
</reference>
<reference key="3">
    <citation type="journal article" date="2004" name="Nat. Genet.">
        <title>Complete sequencing and characterization of 21,243 full-length human cDNAs.</title>
        <authorList>
            <person name="Ota T."/>
            <person name="Suzuki Y."/>
            <person name="Nishikawa T."/>
            <person name="Otsuki T."/>
            <person name="Sugiyama T."/>
            <person name="Irie R."/>
            <person name="Wakamatsu A."/>
            <person name="Hayashi K."/>
            <person name="Sato H."/>
            <person name="Nagai K."/>
            <person name="Kimura K."/>
            <person name="Makita H."/>
            <person name="Sekine M."/>
            <person name="Obayashi M."/>
            <person name="Nishi T."/>
            <person name="Shibahara T."/>
            <person name="Tanaka T."/>
            <person name="Ishii S."/>
            <person name="Yamamoto J."/>
            <person name="Saito K."/>
            <person name="Kawai Y."/>
            <person name="Isono Y."/>
            <person name="Nakamura Y."/>
            <person name="Nagahari K."/>
            <person name="Murakami K."/>
            <person name="Yasuda T."/>
            <person name="Iwayanagi T."/>
            <person name="Wagatsuma M."/>
            <person name="Shiratori A."/>
            <person name="Sudo H."/>
            <person name="Hosoiri T."/>
            <person name="Kaku Y."/>
            <person name="Kodaira H."/>
            <person name="Kondo H."/>
            <person name="Sugawara M."/>
            <person name="Takahashi M."/>
            <person name="Kanda K."/>
            <person name="Yokoi T."/>
            <person name="Furuya T."/>
            <person name="Kikkawa E."/>
            <person name="Omura Y."/>
            <person name="Abe K."/>
            <person name="Kamihara K."/>
            <person name="Katsuta N."/>
            <person name="Sato K."/>
            <person name="Tanikawa M."/>
            <person name="Yamazaki M."/>
            <person name="Ninomiya K."/>
            <person name="Ishibashi T."/>
            <person name="Yamashita H."/>
            <person name="Murakawa K."/>
            <person name="Fujimori K."/>
            <person name="Tanai H."/>
            <person name="Kimata M."/>
            <person name="Watanabe M."/>
            <person name="Hiraoka S."/>
            <person name="Chiba Y."/>
            <person name="Ishida S."/>
            <person name="Ono Y."/>
            <person name="Takiguchi S."/>
            <person name="Watanabe S."/>
            <person name="Yosida M."/>
            <person name="Hotuta T."/>
            <person name="Kusano J."/>
            <person name="Kanehori K."/>
            <person name="Takahashi-Fujii A."/>
            <person name="Hara H."/>
            <person name="Tanase T.-O."/>
            <person name="Nomura Y."/>
            <person name="Togiya S."/>
            <person name="Komai F."/>
            <person name="Hara R."/>
            <person name="Takeuchi K."/>
            <person name="Arita M."/>
            <person name="Imose N."/>
            <person name="Musashino K."/>
            <person name="Yuuki H."/>
            <person name="Oshima A."/>
            <person name="Sasaki N."/>
            <person name="Aotsuka S."/>
            <person name="Yoshikawa Y."/>
            <person name="Matsunawa H."/>
            <person name="Ichihara T."/>
            <person name="Shiohata N."/>
            <person name="Sano S."/>
            <person name="Moriya S."/>
            <person name="Momiyama H."/>
            <person name="Satoh N."/>
            <person name="Takami S."/>
            <person name="Terashima Y."/>
            <person name="Suzuki O."/>
            <person name="Nakagawa S."/>
            <person name="Senoh A."/>
            <person name="Mizoguchi H."/>
            <person name="Goto Y."/>
            <person name="Shimizu F."/>
            <person name="Wakebe H."/>
            <person name="Hishigaki H."/>
            <person name="Watanabe T."/>
            <person name="Sugiyama A."/>
            <person name="Takemoto M."/>
            <person name="Kawakami B."/>
            <person name="Yamazaki M."/>
            <person name="Watanabe K."/>
            <person name="Kumagai A."/>
            <person name="Itakura S."/>
            <person name="Fukuzumi Y."/>
            <person name="Fujimori Y."/>
            <person name="Komiyama M."/>
            <person name="Tashiro H."/>
            <person name="Tanigami A."/>
            <person name="Fujiwara T."/>
            <person name="Ono T."/>
            <person name="Yamada K."/>
            <person name="Fujii Y."/>
            <person name="Ozaki K."/>
            <person name="Hirao M."/>
            <person name="Ohmori Y."/>
            <person name="Kawabata A."/>
            <person name="Hikiji T."/>
            <person name="Kobatake N."/>
            <person name="Inagaki H."/>
            <person name="Ikema Y."/>
            <person name="Okamoto S."/>
            <person name="Okitani R."/>
            <person name="Kawakami T."/>
            <person name="Noguchi S."/>
            <person name="Itoh T."/>
            <person name="Shigeta K."/>
            <person name="Senba T."/>
            <person name="Matsumura K."/>
            <person name="Nakajima Y."/>
            <person name="Mizuno T."/>
            <person name="Morinaga M."/>
            <person name="Sasaki M."/>
            <person name="Togashi T."/>
            <person name="Oyama M."/>
            <person name="Hata H."/>
            <person name="Watanabe M."/>
            <person name="Komatsu T."/>
            <person name="Mizushima-Sugano J."/>
            <person name="Satoh T."/>
            <person name="Shirai Y."/>
            <person name="Takahashi Y."/>
            <person name="Nakagawa K."/>
            <person name="Okumura K."/>
            <person name="Nagase T."/>
            <person name="Nomura N."/>
            <person name="Kikuchi H."/>
            <person name="Masuho Y."/>
            <person name="Yamashita R."/>
            <person name="Nakai K."/>
            <person name="Yada T."/>
            <person name="Nakamura Y."/>
            <person name="Ohara O."/>
            <person name="Isogai T."/>
            <person name="Sugano S."/>
        </authorList>
    </citation>
    <scope>NUCLEOTIDE SEQUENCE [LARGE SCALE MRNA] (ISOFORM 2)</scope>
    <scope>NUCLEOTIDE SEQUENCE [LARGE SCALE MRNA] OF 804-1347 (ISOFORMS 3/4)</scope>
    <scope>NUCLEOTIDE SEQUENCE [LARGE SCALE MRNA] OF 931-1347 (ISOFORM 6)</scope>
    <scope>NUCLEOTIDE SEQUENCE [LARGE SCALE MRNA] OF 972-1347 (ISOFORM 1)</scope>
    <source>
        <tissue>Teratocarcinoma</tissue>
        <tissue>Uterus</tissue>
    </source>
</reference>
<reference key="4">
    <citation type="journal article" date="2006" name="Nature">
        <title>The DNA sequence and biological annotation of human chromosome 1.</title>
        <authorList>
            <person name="Gregory S.G."/>
            <person name="Barlow K.F."/>
            <person name="McLay K.E."/>
            <person name="Kaul R."/>
            <person name="Swarbreck D."/>
            <person name="Dunham A."/>
            <person name="Scott C.E."/>
            <person name="Howe K.L."/>
            <person name="Woodfine K."/>
            <person name="Spencer C.C.A."/>
            <person name="Jones M.C."/>
            <person name="Gillson C."/>
            <person name="Searle S."/>
            <person name="Zhou Y."/>
            <person name="Kokocinski F."/>
            <person name="McDonald L."/>
            <person name="Evans R."/>
            <person name="Phillips K."/>
            <person name="Atkinson A."/>
            <person name="Cooper R."/>
            <person name="Jones C."/>
            <person name="Hall R.E."/>
            <person name="Andrews T.D."/>
            <person name="Lloyd C."/>
            <person name="Ainscough R."/>
            <person name="Almeida J.P."/>
            <person name="Ambrose K.D."/>
            <person name="Anderson F."/>
            <person name="Andrew R.W."/>
            <person name="Ashwell R.I.S."/>
            <person name="Aubin K."/>
            <person name="Babbage A.K."/>
            <person name="Bagguley C.L."/>
            <person name="Bailey J."/>
            <person name="Beasley H."/>
            <person name="Bethel G."/>
            <person name="Bird C.P."/>
            <person name="Bray-Allen S."/>
            <person name="Brown J.Y."/>
            <person name="Brown A.J."/>
            <person name="Buckley D."/>
            <person name="Burton J."/>
            <person name="Bye J."/>
            <person name="Carder C."/>
            <person name="Chapman J.C."/>
            <person name="Clark S.Y."/>
            <person name="Clarke G."/>
            <person name="Clee C."/>
            <person name="Cobley V."/>
            <person name="Collier R.E."/>
            <person name="Corby N."/>
            <person name="Coville G.J."/>
            <person name="Davies J."/>
            <person name="Deadman R."/>
            <person name="Dunn M."/>
            <person name="Earthrowl M."/>
            <person name="Ellington A.G."/>
            <person name="Errington H."/>
            <person name="Frankish A."/>
            <person name="Frankland J."/>
            <person name="French L."/>
            <person name="Garner P."/>
            <person name="Garnett J."/>
            <person name="Gay L."/>
            <person name="Ghori M.R.J."/>
            <person name="Gibson R."/>
            <person name="Gilby L.M."/>
            <person name="Gillett W."/>
            <person name="Glithero R.J."/>
            <person name="Grafham D.V."/>
            <person name="Griffiths C."/>
            <person name="Griffiths-Jones S."/>
            <person name="Grocock R."/>
            <person name="Hammond S."/>
            <person name="Harrison E.S.I."/>
            <person name="Hart E."/>
            <person name="Haugen E."/>
            <person name="Heath P.D."/>
            <person name="Holmes S."/>
            <person name="Holt K."/>
            <person name="Howden P.J."/>
            <person name="Hunt A.R."/>
            <person name="Hunt S.E."/>
            <person name="Hunter G."/>
            <person name="Isherwood J."/>
            <person name="James R."/>
            <person name="Johnson C."/>
            <person name="Johnson D."/>
            <person name="Joy A."/>
            <person name="Kay M."/>
            <person name="Kershaw J.K."/>
            <person name="Kibukawa M."/>
            <person name="Kimberley A.M."/>
            <person name="King A."/>
            <person name="Knights A.J."/>
            <person name="Lad H."/>
            <person name="Laird G."/>
            <person name="Lawlor S."/>
            <person name="Leongamornlert D.A."/>
            <person name="Lloyd D.M."/>
            <person name="Loveland J."/>
            <person name="Lovell J."/>
            <person name="Lush M.J."/>
            <person name="Lyne R."/>
            <person name="Martin S."/>
            <person name="Mashreghi-Mohammadi M."/>
            <person name="Matthews L."/>
            <person name="Matthews N.S.W."/>
            <person name="McLaren S."/>
            <person name="Milne S."/>
            <person name="Mistry S."/>
            <person name="Moore M.J.F."/>
            <person name="Nickerson T."/>
            <person name="O'Dell C.N."/>
            <person name="Oliver K."/>
            <person name="Palmeiri A."/>
            <person name="Palmer S.A."/>
            <person name="Parker A."/>
            <person name="Patel D."/>
            <person name="Pearce A.V."/>
            <person name="Peck A.I."/>
            <person name="Pelan S."/>
            <person name="Phelps K."/>
            <person name="Phillimore B.J."/>
            <person name="Plumb R."/>
            <person name="Rajan J."/>
            <person name="Raymond C."/>
            <person name="Rouse G."/>
            <person name="Saenphimmachak C."/>
            <person name="Sehra H.K."/>
            <person name="Sheridan E."/>
            <person name="Shownkeen R."/>
            <person name="Sims S."/>
            <person name="Skuce C.D."/>
            <person name="Smith M."/>
            <person name="Steward C."/>
            <person name="Subramanian S."/>
            <person name="Sycamore N."/>
            <person name="Tracey A."/>
            <person name="Tromans A."/>
            <person name="Van Helmond Z."/>
            <person name="Wall M."/>
            <person name="Wallis J.M."/>
            <person name="White S."/>
            <person name="Whitehead S.L."/>
            <person name="Wilkinson J.E."/>
            <person name="Willey D.L."/>
            <person name="Williams H."/>
            <person name="Wilming L."/>
            <person name="Wray P.W."/>
            <person name="Wu Z."/>
            <person name="Coulson A."/>
            <person name="Vaudin M."/>
            <person name="Sulston J.E."/>
            <person name="Durbin R.M."/>
            <person name="Hubbard T."/>
            <person name="Wooster R."/>
            <person name="Dunham I."/>
            <person name="Carter N.P."/>
            <person name="McVean G."/>
            <person name="Ross M.T."/>
            <person name="Harrow J."/>
            <person name="Olson M.V."/>
            <person name="Beck S."/>
            <person name="Rogers J."/>
            <person name="Bentley D.R."/>
        </authorList>
    </citation>
    <scope>NUCLEOTIDE SEQUENCE [LARGE SCALE GENOMIC DNA]</scope>
    <scope>ALTERNATIVE SPLICING</scope>
</reference>
<reference key="5">
    <citation type="journal article" date="2004" name="Genome Res.">
        <title>The status, quality, and expansion of the NIH full-length cDNA project: the Mammalian Gene Collection (MGC).</title>
        <authorList>
            <consortium name="The MGC Project Team"/>
        </authorList>
    </citation>
    <scope>NUCLEOTIDE SEQUENCE [LARGE SCALE MRNA] (ISOFORMS 3 AND 9)</scope>
    <scope>NUCLEOTIDE SEQUENCE [LARGE SCALE MRNA] OF 326-1347 (ISOFORM 2)</scope>
    <source>
        <tissue>Brain</tissue>
    </source>
</reference>
<reference key="6">
    <citation type="journal article" date="2004" name="J. Mol. Biol.">
        <title>Alternative splice variants encoding unstable protein domains exist in the human brain.</title>
        <authorList>
            <person name="Homma K."/>
            <person name="Kikuno R.F."/>
            <person name="Nagase T."/>
            <person name="Ohara O."/>
            <person name="Nishikawa K."/>
        </authorList>
    </citation>
    <scope>NUCLEOTIDE SEQUENCE [MRNA] OF 193-1347 (ISOFORM 5)</scope>
</reference>
<reference key="7">
    <citation type="journal article" date="2007" name="BMC Genomics">
        <title>The full-ORF clone resource of the German cDNA consortium.</title>
        <authorList>
            <person name="Bechtel S."/>
            <person name="Rosenfelder H."/>
            <person name="Duda A."/>
            <person name="Schmidt C.P."/>
            <person name="Ernst U."/>
            <person name="Wellenreuther R."/>
            <person name="Mehrle A."/>
            <person name="Schuster C."/>
            <person name="Bahr A."/>
            <person name="Bloecker H."/>
            <person name="Heubner D."/>
            <person name="Hoerlein A."/>
            <person name="Michel G."/>
            <person name="Wedler H."/>
            <person name="Koehrer K."/>
            <person name="Ottenwaelder B."/>
            <person name="Poustka A."/>
            <person name="Wiemann S."/>
            <person name="Schupp I."/>
        </authorList>
    </citation>
    <scope>NUCLEOTIDE SEQUENCE [LARGE SCALE MRNA] OF 1040-1347 (ISOFORM 7)</scope>
    <scope>NUCLEOTIDE SEQUENCE [LARGE SCALE MRNA] OF 1204-1347 (ISOFORMS 1/3/4/6/7)</scope>
    <source>
        <tissue>Amygdala</tissue>
        <tissue>Esophageal carcinoma</tissue>
    </source>
</reference>
<reference key="8">
    <citation type="journal article" date="2008" name="Proc. Natl. Acad. Sci. U.S.A.">
        <title>A quantitative atlas of mitotic phosphorylation.</title>
        <authorList>
            <person name="Dephoure N."/>
            <person name="Zhou C."/>
            <person name="Villen J."/>
            <person name="Beausoleil S.A."/>
            <person name="Bakalarski C.E."/>
            <person name="Elledge S.J."/>
            <person name="Gygi S.P."/>
        </authorList>
    </citation>
    <scope>PHOSPHORYLATION [LARGE SCALE ANALYSIS] AT TYR-481 AND SER-485</scope>
    <scope>IDENTIFICATION BY MASS SPECTROMETRY [LARGE SCALE ANALYSIS]</scope>
    <source>
        <tissue>Cervix carcinoma</tissue>
    </source>
</reference>
<reference key="9">
    <citation type="journal article" date="2013" name="J. Biol. Chem.">
        <title>Myocilin mediates myelination in the peripheral nervous system through ErbB2/3 signaling.</title>
        <authorList>
            <person name="Kwon H.S."/>
            <person name="Johnson T.V."/>
            <person name="Joe M.K."/>
            <person name="Abu-Asab M."/>
            <person name="Zhang J."/>
            <person name="Chan C.C."/>
            <person name="Tomarev S.I."/>
        </authorList>
    </citation>
    <scope>INTERACTION WITH MYOC</scope>
</reference>
<reference key="10">
    <citation type="journal article" date="2011" name="J. Biol. Chem.">
        <title>Homophilic adhesion mechanism of neurofascin, a member of the L1 family of neural cell adhesion molecules.</title>
        <authorList>
            <person name="Liu H."/>
            <person name="Focia P.J."/>
            <person name="He X."/>
        </authorList>
    </citation>
    <scope>X-RAY CRYSTALLOGRAPHY (2.6 ANGSTROMS) OF 25-428</scope>
    <scope>GLYCOSYLATION AT ASN-409</scope>
    <scope>SUBUNIT</scope>
    <scope>DISULFIDE BONDS</scope>
</reference>
<reference key="11">
    <citation type="journal article" date="2017" name="Hum. Genet.">
        <title>Expanding the genetic heterogeneity of intellectual disability.</title>
        <authorList>
            <person name="Anazi S."/>
            <person name="Maddirevula S."/>
            <person name="Salpietro V."/>
            <person name="Asi Y.T."/>
            <person name="Alsahli S."/>
            <person name="Alhashem A."/>
            <person name="Shamseldin H.E."/>
            <person name="AlZahrani F."/>
            <person name="Patel N."/>
            <person name="Ibrahim N."/>
            <person name="Abdulwahab F.M."/>
            <person name="Hashem M."/>
            <person name="Alhashmi N."/>
            <person name="Al Murshedi F."/>
            <person name="Al Kindy A."/>
            <person name="Alshaer A."/>
            <person name="Rumayyan A."/>
            <person name="Al Tala S."/>
            <person name="Kurdi W."/>
            <person name="Alsaman A."/>
            <person name="Alasmari A."/>
            <person name="Banu S."/>
            <person name="Sultan T."/>
            <person name="Saleh M.M."/>
            <person name="Alkuraya H."/>
            <person name="Salih M.A."/>
            <person name="Aldhalaan H."/>
            <person name="Ben-Omran T."/>
            <person name="Al Musafri F."/>
            <person name="Ali R."/>
            <person name="Suleiman J."/>
            <person name="Tabarki B."/>
            <person name="El-Hattab A.W."/>
            <person name="Bupp C."/>
            <person name="Alfadhel M."/>
            <person name="Al Tassan N."/>
            <person name="Monies D."/>
            <person name="Arold S.T."/>
            <person name="Abouelhoda M."/>
            <person name="Lashley T."/>
            <person name="Houlden H."/>
            <person name="Faqeih E."/>
            <person name="Alkuraya F.S."/>
        </authorList>
    </citation>
    <scope>INVOLVEMENT IN NEDCPMD</scope>
    <scope>VARIANT NEDCPMD PRO-359</scope>
</reference>
<reference key="12">
    <citation type="journal article" date="2018" name="Hum. Genet.">
        <title>Correction to: Expanding the genetic heterogeneity of intellectual disability.</title>
        <authorList>
            <person name="Anazi S."/>
            <person name="Maddirevula S."/>
            <person name="Salpietro V."/>
            <person name="Asi Y.T."/>
            <person name="Alsahli S."/>
            <person name="Alhashem A."/>
            <person name="Shamseldin H.E."/>
            <person name="AlZahrani F."/>
            <person name="Patel N."/>
            <person name="Ibrahim N."/>
            <person name="Abdulwahab F.M."/>
            <person name="Hashem M."/>
            <person name="Alhashmi N."/>
            <person name="Al Murshedi F."/>
            <person name="Al Kindy A."/>
            <person name="Alshaer A."/>
            <person name="Rumayyan A."/>
            <person name="Al Tala S."/>
            <person name="Kurdi W."/>
            <person name="Alsaman A."/>
            <person name="Alasmari A."/>
            <person name="Banu S."/>
            <person name="Sultan T."/>
            <person name="Saleh M.M."/>
            <person name="Alkuraya H."/>
            <person name="Salih M.A."/>
            <person name="Aldhalaan H."/>
            <person name="Ben-Omran T."/>
            <person name="Al Musafri F."/>
            <person name="Ali R."/>
            <person name="Suleiman J."/>
            <person name="Tabarki B."/>
            <person name="El-Hattab A.W."/>
            <person name="Bupp C."/>
            <person name="Alfadhel M."/>
            <person name="Al Tassan N."/>
            <person name="Monies D."/>
            <person name="Arold S.T."/>
            <person name="Abouelhoda M."/>
            <person name="Lashley T."/>
            <person name="Houlden H."/>
            <person name="Faqeih E."/>
            <person name="Alkuraya F.S."/>
        </authorList>
    </citation>
    <scope>ERRATUM OF PUBMED:28940097</scope>
</reference>
<reference key="13">
    <citation type="journal article" date="2018" name="Hum. Mol. Genet.">
        <title>Homozygous mutation in the Neurofascin gene affecting the glial isoform of Neurofascin causes severe neurodevelopment disorder with hypotonia, amimia and areflexia.</title>
        <authorList>
            <person name="Smigiel R."/>
            <person name="Sherman D.L."/>
            <person name="Rydzanicz M."/>
            <person name="Walczak A."/>
            <person name="Mikolajkow D."/>
            <person name="Krolak-Olejnik B."/>
            <person name="Kosinska J."/>
            <person name="Gasperowicz P."/>
            <person name="Biernacka A."/>
            <person name="Stawinski P."/>
            <person name="Marciniak M."/>
            <person name="Andrzejewski W."/>
            <person name="Boczar M."/>
            <person name="Krajewski P."/>
            <person name="Sasiadek M.M."/>
            <person name="Brophy P.J."/>
            <person name="Ploski R."/>
        </authorList>
    </citation>
    <scope>VARIANT NEDCPMD 835-VAL--ALA-1347 DEL</scope>
    <scope>CHARACTERIZATION OF VARIANT NEDCPMD 835-ARG--ALA-1347 DEL</scope>
    <scope>SUBCELLULAR LOCATION (ISOFORM 8)</scope>
</reference>
<reference key="14">
    <citation type="journal article" date="2019" name="Parkinsonism Relat. Disord.">
        <title>Neurofascin (NFASC) gene mutation causes autosomal recessive ataxia with demyelinating neuropathy.</title>
        <authorList>
            <person name="Monfrini E."/>
            <person name="Straniero L."/>
            <person name="Bonato S."/>
            <person name="Monzio Compagnoni G."/>
            <person name="Bordoni A."/>
            <person name="Dilena R."/>
            <person name="Rinchetti P."/>
            <person name="Silipigni R."/>
            <person name="Ronchi D."/>
            <person name="Corti S."/>
            <person name="Comi G.P."/>
            <person name="Bresolin N."/>
            <person name="Duga S."/>
            <person name="Di Fonzo A."/>
        </authorList>
    </citation>
    <scope>INVOLVEMENT IN NEDCPMD</scope>
    <scope>VARIANT NEDCPMD GLU-1229</scope>
    <scope>CHARACTERIZATION OF VARIANT NEDCPMD GLU-1229</scope>
    <scope>SUBCELLULAR LOCATION</scope>
</reference>
<comment type="function">
    <text evidence="1">Cell adhesion, ankyrin-binding protein which may be involved in neurite extension, axonal guidance, synaptogenesis, myelination and neuron-glial cell interactions.</text>
</comment>
<comment type="subunit">
    <text evidence="1 8 9">Horseshoe-shaped homodimer. Probable constituent of a NFASC/NRCAM/ankyrin-G complex. Associates with the sodium channel beta-1 (SCN1B) and beta-3 (SCN3B) subunits. Interacts with GLDN/gliomedin (By similarity). Interacts with MYOC.</text>
</comment>
<comment type="interaction">
    <interactant intactId="EBI-12035911">
        <id>O94856-3</id>
    </interactant>
    <interactant intactId="EBI-11743294">
        <id>Q8IZP0-5</id>
        <label>ABI1</label>
    </interactant>
    <organismsDiffer>false</organismsDiffer>
    <experiments>3</experiments>
</comment>
<comment type="interaction">
    <interactant intactId="EBI-12035911">
        <id>O94856-3</id>
    </interactant>
    <interactant intactId="EBI-11096309">
        <id>Q9NYB9-2</id>
        <label>ABI2</label>
    </interactant>
    <organismsDiffer>false</organismsDiffer>
    <experiments>3</experiments>
</comment>
<comment type="subcellular location">
    <subcellularLocation>
        <location evidence="12">Cell membrane</location>
        <topology evidence="4">Single-pass type I membrane protein</topology>
    </subcellularLocation>
</comment>
<comment type="subcellular location">
    <molecule>Isoform 8</molecule>
    <subcellularLocation>
        <location evidence="11">Cell junction</location>
        <location evidence="11">Paranodal septate junction</location>
    </subcellularLocation>
</comment>
<comment type="alternative products">
    <event type="alternative splicing"/>
    <isoform>
        <id>O94856-1</id>
        <name>1</name>
        <sequence type="displayed"/>
    </isoform>
    <isoform>
        <id>O94856-2</id>
        <name>2</name>
        <sequence type="described" ref="VSP_016426 VSP_008938"/>
    </isoform>
    <isoform>
        <id>O94856-3</id>
        <name>3</name>
        <sequence type="described" ref="VSP_016424 VSP_016425 VSP_008937 VSP_008940"/>
    </isoform>
    <isoform>
        <id>O94856-4</id>
        <name>4</name>
        <sequence type="described" ref="VSP_016427 VSP_016428 VSP_008940"/>
    </isoform>
    <isoform>
        <id>O94856-5</id>
        <name>5</name>
        <sequence type="described" ref="VSP_008937 VSP_016429"/>
    </isoform>
    <isoform>
        <id>O94856-6</id>
        <name>6</name>
        <sequence type="described" ref="VSP_016430 VSP_016434"/>
    </isoform>
    <isoform>
        <id>O94856-7</id>
        <name>7</name>
        <sequence type="described" ref="VSP_016433"/>
    </isoform>
    <isoform>
        <id>O94856-8</id>
        <name>8</name>
        <name evidence="17">Nfasc155</name>
        <sequence type="described" ref="VSP_016424 VSP_016425 VSP_008937 VSP_016432"/>
    </isoform>
    <isoform>
        <id>O94856-9</id>
        <name>9</name>
        <sequence type="described" ref="VSP_016427 VSP_016428"/>
    </isoform>
    <isoform>
        <id>O94856-10</id>
        <name>10</name>
        <sequence type="described" ref="VSP_016424 VSP_008937 VSP_016432"/>
    </isoform>
    <isoform>
        <id>O94856-11</id>
        <name>11</name>
        <sequence type="described" ref="VSP_016424 VSP_016425 VSP_016432"/>
    </isoform>
    <isoform>
        <id>O94856-12</id>
        <name>12</name>
        <sequence type="described" ref="VSP_016427 VSP_016428 VSP_016432"/>
    </isoform>
    <isoform>
        <id>O94856-13</id>
        <name>13</name>
        <sequence type="described" ref="VSP_016431"/>
    </isoform>
</comment>
<comment type="domain">
    <text>Homophilic adhesion is primarily mediated by the interaction of the second Ig-like domains.</text>
</comment>
<comment type="disease" evidence="10 11 12">
    <disease id="DI-05508">
        <name>Neurodevelopmental disorder with central and peripheral motor dysfunction</name>
        <acronym>NEDCPMD</acronym>
        <description>An autosomal recessive neurodevelopmental disorder with early onset and a highly variable phenotype. Disease features include hypotonia apparent from birth, poor feeding, global developmental delay with absence of reaction to touch and no eye contact, infantile-onset progressive ataxia and demyelinating peripheral neuropathy.</description>
        <dbReference type="MIM" id="618356"/>
    </disease>
    <text>The disease is caused by variants affecting the gene represented in this entry.</text>
</comment>
<comment type="miscellaneous">
    <molecule>Isoform 2</molecule>
    <text evidence="19">May be due to intron retention.</text>
</comment>
<comment type="miscellaneous">
    <molecule>Isoform 5</molecule>
    <text evidence="19">May be due to intron retention.</text>
</comment>
<comment type="similarity">
    <text evidence="19">Belongs to the immunoglobulin superfamily. L1/neurofascin/NgCAM family.</text>
</comment>
<comment type="sequence caution" evidence="19">
    <conflict type="erroneous initiation">
        <sequence resource="EMBL-CDS" id="BAA34476"/>
    </conflict>
</comment>
<comment type="sequence caution" evidence="19">
    <conflict type="erroneous initiation">
        <sequence resource="EMBL-CDS" id="BAB55195"/>
    </conflict>
</comment>
<comment type="sequence caution" evidence="19">
    <conflict type="erroneous initiation">
        <sequence resource="EMBL-CDS" id="BAC87577"/>
    </conflict>
</comment>
<accession>O94856</accession>
<accession>B2RNN8</accession>
<accession>B3KQZ1</accession>
<accession>B5MDP6</accession>
<accession>B5MDR6</accession>
<accession>B7ZMD8</accession>
<accession>Q149P5</accession>
<accession>Q5T2F0</accession>
<accession>Q5T2F1</accession>
<accession>Q5T2F2</accession>
<accession>Q5T2F3</accession>
<accession>Q5T2F4</accession>
<accession>Q5T2F5</accession>
<accession>Q5T2F6</accession>
<accession>Q5T2F7</accession>
<accession>Q5T2F9</accession>
<accession>Q5T2G0</accession>
<accession>Q5W9F8</accession>
<accession>Q68DH3</accession>
<accession>Q6ZQV6</accession>
<accession>Q7Z3K1</accession>
<accession>Q96HT1</accession>
<accession>Q96K50</accession>
<protein>
    <recommendedName>
        <fullName>Neurofascin</fullName>
    </recommendedName>
</protein>
<organism>
    <name type="scientific">Homo sapiens</name>
    <name type="common">Human</name>
    <dbReference type="NCBI Taxonomy" id="9606"/>
    <lineage>
        <taxon>Eukaryota</taxon>
        <taxon>Metazoa</taxon>
        <taxon>Chordata</taxon>
        <taxon>Craniata</taxon>
        <taxon>Vertebrata</taxon>
        <taxon>Euteleostomi</taxon>
        <taxon>Mammalia</taxon>
        <taxon>Eutheria</taxon>
        <taxon>Euarchontoglires</taxon>
        <taxon>Primates</taxon>
        <taxon>Haplorrhini</taxon>
        <taxon>Catarrhini</taxon>
        <taxon>Hominidae</taxon>
        <taxon>Homo</taxon>
    </lineage>
</organism>
<sequence length="1347" mass="150027">MARQPPPPWVHAAFLLCLLSLGGAIEIPMDPSIQNELTQPPTITKQSAKDHIVDPRDNILIECEAKGNPAPSFHWTRNSRFFNIAKDPRVSMRRRSGTLVIDFRSGGRPEEYEGEYQCFARNKFGTALSNRIRLQVSKSPLWPKENLDPVVVQEGAPLTLQCNPPPGLPSPVIFWMSSSMEPITQDKRVSQGHNGDLYFSNVMLQDMQTDYSCNARFHFTHTIQQKNPFTLKVLTTRGVAERTPSFMYPQGTASSQMVLRGMDLLLECIASGVPTPDIAWYKKGGDLPSDKAKFENFNKALRITNVSEEDSGEYFCLASNKMGSIRHTISVRVKAAPYWLDEPKNLILAPGEDGRLVCRANGNPKPTVQWMVNGEPLQSAPPNPNREVAGDTIIFRDTQISSRAVYQCNTSNEHGYLLANAFVSVLDVPPRMLSPRNQLIRVILYNRTRLDCPFFGSPIPTLRWFKNGQGSNLDGGNYHVYENGSLEIKMIRKEDQGIYTCVATNILGKAENQVRLEVKDPTRIYRMPEDQVARRGTTVQLECRVKHDPSLKLTVSWLKDDEPLYIGNRMKKEDDSLTIFGVAERDQGSYTCVASTELDQDLAKAYLTVLADQATPTNRLAALPKGRPDRPRDLELTDLAERSVRLTWIPGDANNSPITDYVVQFEEDQFQPGVWHDHSKYPGSVNSAVLRLSPYVNYQFRVIAINEVGSSHPSLPSERYRTSGAPPESNPGDVKGEGTRKNNMEITWTPMNATSAFGPNLRYIVKWRRRETREAWNNVTVWGSRYVVGQTPVYVPYEIRVQAENDFGKGPEPESVIGYSGEDYPRAAPTEVKVRVMNSTAISLQWNRVYSDTVQGQLREYRAYYWRESSLLKNLWVSQKRQQASFPGDRLRGVVSRLFPYSNYKLEMVVVNGRGDGPRSETKEFTTPEGVPSAPRRFRVRQPNLETINLEWDHPEHPNGIMIGYTLKYVAFNGTKVGKQIVENFSPNQTKFTVQRTDPVSRYRFTLSARTQVGSGEAVTEESPAPPNEATPTAAPPTLPPTTVGATGAVSSTDATAIAATTEATTVPIIPTVAPTTIATTTTVATTTTTTAAATTTTESPPTTTSGTKIHESAPDEQSIWNVTVLPNSKWANITWKHNFGPGTDFVVEYIDSNHTKKTVPVKAQAQPIQLTDLYPGMTYTLRVYSRDNEGISSTVITFMTSTAYTNNQADIATQGWFIGLMCAIALLVLILLIVCFIKRSRGGKYPVREKKDVPLGPEDPKEEDGSFDYSDEDNKPLQGSQTSLDGTIKQQESDDSLVDYGEGGEGQFNEDGSFIGQYTVKKDKEETEGNESSEATSPVNAIYSLA</sequence>